<proteinExistence type="inferred from homology"/>
<sequence>MARVKRGNIARKRRNKILNLAKGFRGGNKNLFRTANQRVMKALCNAYRDRRRRKRDFRRLWIARINASARINGTNYSKLINGLKTSEIIINRKMLAQLALNDPQSFEKIVSAVSK</sequence>
<reference key="1">
    <citation type="journal article" date="2007" name="PLoS Genet.">
        <title>Patterns and implications of gene gain and loss in the evolution of Prochlorococcus.</title>
        <authorList>
            <person name="Kettler G.C."/>
            <person name="Martiny A.C."/>
            <person name="Huang K."/>
            <person name="Zucker J."/>
            <person name="Coleman M.L."/>
            <person name="Rodrigue S."/>
            <person name="Chen F."/>
            <person name="Lapidus A."/>
            <person name="Ferriera S."/>
            <person name="Johnson J."/>
            <person name="Steglich C."/>
            <person name="Church G.M."/>
            <person name="Richardson P."/>
            <person name="Chisholm S.W."/>
        </authorList>
    </citation>
    <scope>NUCLEOTIDE SEQUENCE [LARGE SCALE GENOMIC DNA]</scope>
    <source>
        <strain>MIT 9515</strain>
    </source>
</reference>
<keyword id="KW-0687">Ribonucleoprotein</keyword>
<keyword id="KW-0689">Ribosomal protein</keyword>
<keyword id="KW-0694">RNA-binding</keyword>
<keyword id="KW-0699">rRNA-binding</keyword>
<comment type="function">
    <text evidence="1">Binds directly to 23S ribosomal RNA and is necessary for the in vitro assembly process of the 50S ribosomal subunit. It is not involved in the protein synthesizing functions of that subunit.</text>
</comment>
<comment type="similarity">
    <text evidence="1">Belongs to the bacterial ribosomal protein bL20 family.</text>
</comment>
<organism>
    <name type="scientific">Prochlorococcus marinus (strain MIT 9515)</name>
    <dbReference type="NCBI Taxonomy" id="167542"/>
    <lineage>
        <taxon>Bacteria</taxon>
        <taxon>Bacillati</taxon>
        <taxon>Cyanobacteriota</taxon>
        <taxon>Cyanophyceae</taxon>
        <taxon>Synechococcales</taxon>
        <taxon>Prochlorococcaceae</taxon>
        <taxon>Prochlorococcus</taxon>
    </lineage>
</organism>
<protein>
    <recommendedName>
        <fullName evidence="1">Large ribosomal subunit protein bL20</fullName>
    </recommendedName>
    <alternativeName>
        <fullName evidence="2">50S ribosomal protein L20</fullName>
    </alternativeName>
</protein>
<feature type="chain" id="PRO_1000049035" description="Large ribosomal subunit protein bL20">
    <location>
        <begin position="1"/>
        <end position="115"/>
    </location>
</feature>
<gene>
    <name evidence="1" type="primary">rplT</name>
    <name evidence="1" type="synonym">rpl20</name>
    <name type="ordered locus">P9515_18521</name>
</gene>
<name>RL20_PROM5</name>
<accession>A2BZ48</accession>
<evidence type="ECO:0000255" key="1">
    <source>
        <dbReference type="HAMAP-Rule" id="MF_00382"/>
    </source>
</evidence>
<evidence type="ECO:0000305" key="2"/>
<dbReference type="EMBL" id="CP000552">
    <property type="protein sequence ID" value="ABM73059.1"/>
    <property type="molecule type" value="Genomic_DNA"/>
</dbReference>
<dbReference type="RefSeq" id="WP_011821143.1">
    <property type="nucleotide sequence ID" value="NC_008817.1"/>
</dbReference>
<dbReference type="SMR" id="A2BZ48"/>
<dbReference type="STRING" id="167542.P9515_18521"/>
<dbReference type="GeneID" id="60200899"/>
<dbReference type="KEGG" id="pmc:P9515_18521"/>
<dbReference type="eggNOG" id="COG0292">
    <property type="taxonomic scope" value="Bacteria"/>
</dbReference>
<dbReference type="HOGENOM" id="CLU_123265_1_0_3"/>
<dbReference type="OrthoDB" id="9808966at2"/>
<dbReference type="Proteomes" id="UP000001589">
    <property type="component" value="Chromosome"/>
</dbReference>
<dbReference type="GO" id="GO:1990904">
    <property type="term" value="C:ribonucleoprotein complex"/>
    <property type="evidence" value="ECO:0007669"/>
    <property type="project" value="UniProtKB-KW"/>
</dbReference>
<dbReference type="GO" id="GO:0005840">
    <property type="term" value="C:ribosome"/>
    <property type="evidence" value="ECO:0007669"/>
    <property type="project" value="UniProtKB-KW"/>
</dbReference>
<dbReference type="GO" id="GO:0019843">
    <property type="term" value="F:rRNA binding"/>
    <property type="evidence" value="ECO:0007669"/>
    <property type="project" value="UniProtKB-UniRule"/>
</dbReference>
<dbReference type="GO" id="GO:0003735">
    <property type="term" value="F:structural constituent of ribosome"/>
    <property type="evidence" value="ECO:0007669"/>
    <property type="project" value="InterPro"/>
</dbReference>
<dbReference type="GO" id="GO:0000027">
    <property type="term" value="P:ribosomal large subunit assembly"/>
    <property type="evidence" value="ECO:0007669"/>
    <property type="project" value="UniProtKB-UniRule"/>
</dbReference>
<dbReference type="GO" id="GO:0006412">
    <property type="term" value="P:translation"/>
    <property type="evidence" value="ECO:0007669"/>
    <property type="project" value="InterPro"/>
</dbReference>
<dbReference type="CDD" id="cd07026">
    <property type="entry name" value="Ribosomal_L20"/>
    <property type="match status" value="1"/>
</dbReference>
<dbReference type="FunFam" id="1.10.1900.20:FF:000001">
    <property type="entry name" value="50S ribosomal protein L20"/>
    <property type="match status" value="1"/>
</dbReference>
<dbReference type="Gene3D" id="6.10.160.10">
    <property type="match status" value="1"/>
</dbReference>
<dbReference type="Gene3D" id="1.10.1900.20">
    <property type="entry name" value="Ribosomal protein L20"/>
    <property type="match status" value="1"/>
</dbReference>
<dbReference type="HAMAP" id="MF_00382">
    <property type="entry name" value="Ribosomal_bL20"/>
    <property type="match status" value="1"/>
</dbReference>
<dbReference type="InterPro" id="IPR005813">
    <property type="entry name" value="Ribosomal_bL20"/>
</dbReference>
<dbReference type="InterPro" id="IPR049946">
    <property type="entry name" value="RIBOSOMAL_L20_CS"/>
</dbReference>
<dbReference type="InterPro" id="IPR035566">
    <property type="entry name" value="Ribosomal_protein_bL20_C"/>
</dbReference>
<dbReference type="NCBIfam" id="TIGR01032">
    <property type="entry name" value="rplT_bact"/>
    <property type="match status" value="1"/>
</dbReference>
<dbReference type="PANTHER" id="PTHR10986">
    <property type="entry name" value="39S RIBOSOMAL PROTEIN L20"/>
    <property type="match status" value="1"/>
</dbReference>
<dbReference type="Pfam" id="PF00453">
    <property type="entry name" value="Ribosomal_L20"/>
    <property type="match status" value="1"/>
</dbReference>
<dbReference type="PRINTS" id="PR00062">
    <property type="entry name" value="RIBOSOMALL20"/>
</dbReference>
<dbReference type="SUPFAM" id="SSF74731">
    <property type="entry name" value="Ribosomal protein L20"/>
    <property type="match status" value="1"/>
</dbReference>
<dbReference type="PROSITE" id="PS00937">
    <property type="entry name" value="RIBOSOMAL_L20"/>
    <property type="match status" value="1"/>
</dbReference>